<dbReference type="EC" id="6.1.1.17" evidence="1"/>
<dbReference type="EMBL" id="AJ965256">
    <property type="protein sequence ID" value="CAI83372.1"/>
    <property type="molecule type" value="Genomic_DNA"/>
</dbReference>
<dbReference type="RefSeq" id="WP_011309723.1">
    <property type="nucleotide sequence ID" value="NC_007356.1"/>
</dbReference>
<dbReference type="SMR" id="Q3ZYP4"/>
<dbReference type="KEGG" id="deh:cbdbA1316"/>
<dbReference type="HOGENOM" id="CLU_015768_6_3_0"/>
<dbReference type="Proteomes" id="UP000000433">
    <property type="component" value="Chromosome"/>
</dbReference>
<dbReference type="GO" id="GO:0005829">
    <property type="term" value="C:cytosol"/>
    <property type="evidence" value="ECO:0007669"/>
    <property type="project" value="TreeGrafter"/>
</dbReference>
<dbReference type="GO" id="GO:0005524">
    <property type="term" value="F:ATP binding"/>
    <property type="evidence" value="ECO:0007669"/>
    <property type="project" value="UniProtKB-UniRule"/>
</dbReference>
<dbReference type="GO" id="GO:0004818">
    <property type="term" value="F:glutamate-tRNA ligase activity"/>
    <property type="evidence" value="ECO:0007669"/>
    <property type="project" value="UniProtKB-UniRule"/>
</dbReference>
<dbReference type="GO" id="GO:0000049">
    <property type="term" value="F:tRNA binding"/>
    <property type="evidence" value="ECO:0007669"/>
    <property type="project" value="InterPro"/>
</dbReference>
<dbReference type="GO" id="GO:0008270">
    <property type="term" value="F:zinc ion binding"/>
    <property type="evidence" value="ECO:0007669"/>
    <property type="project" value="UniProtKB-UniRule"/>
</dbReference>
<dbReference type="GO" id="GO:0006424">
    <property type="term" value="P:glutamyl-tRNA aminoacylation"/>
    <property type="evidence" value="ECO:0007669"/>
    <property type="project" value="UniProtKB-UniRule"/>
</dbReference>
<dbReference type="CDD" id="cd00808">
    <property type="entry name" value="GluRS_core"/>
    <property type="match status" value="1"/>
</dbReference>
<dbReference type="FunFam" id="3.40.50.620:FF:000045">
    <property type="entry name" value="Glutamate--tRNA ligase, mitochondrial"/>
    <property type="match status" value="1"/>
</dbReference>
<dbReference type="Gene3D" id="1.10.10.350">
    <property type="match status" value="1"/>
</dbReference>
<dbReference type="Gene3D" id="3.40.50.620">
    <property type="entry name" value="HUPs"/>
    <property type="match status" value="1"/>
</dbReference>
<dbReference type="HAMAP" id="MF_00022">
    <property type="entry name" value="Glu_tRNA_synth_type1"/>
    <property type="match status" value="1"/>
</dbReference>
<dbReference type="InterPro" id="IPR045462">
    <property type="entry name" value="aa-tRNA-synth_I_cd-bd"/>
</dbReference>
<dbReference type="InterPro" id="IPR020751">
    <property type="entry name" value="aa-tRNA-synth_I_codon-bd_sub2"/>
</dbReference>
<dbReference type="InterPro" id="IPR001412">
    <property type="entry name" value="aa-tRNA-synth_I_CS"/>
</dbReference>
<dbReference type="InterPro" id="IPR008925">
    <property type="entry name" value="aa_tRNA-synth_I_cd-bd_sf"/>
</dbReference>
<dbReference type="InterPro" id="IPR004527">
    <property type="entry name" value="Glu-tRNA-ligase_bac/mito"/>
</dbReference>
<dbReference type="InterPro" id="IPR000924">
    <property type="entry name" value="Glu/Gln-tRNA-synth"/>
</dbReference>
<dbReference type="InterPro" id="IPR020058">
    <property type="entry name" value="Glu/Gln-tRNA-synth_Ib_cat-dom"/>
</dbReference>
<dbReference type="InterPro" id="IPR049940">
    <property type="entry name" value="GluQ/Sye"/>
</dbReference>
<dbReference type="InterPro" id="IPR033910">
    <property type="entry name" value="GluRS_core"/>
</dbReference>
<dbReference type="InterPro" id="IPR014729">
    <property type="entry name" value="Rossmann-like_a/b/a_fold"/>
</dbReference>
<dbReference type="NCBIfam" id="TIGR00464">
    <property type="entry name" value="gltX_bact"/>
    <property type="match status" value="1"/>
</dbReference>
<dbReference type="PANTHER" id="PTHR43311">
    <property type="entry name" value="GLUTAMATE--TRNA LIGASE"/>
    <property type="match status" value="1"/>
</dbReference>
<dbReference type="PANTHER" id="PTHR43311:SF2">
    <property type="entry name" value="GLUTAMATE--TRNA LIGASE, MITOCHONDRIAL-RELATED"/>
    <property type="match status" value="1"/>
</dbReference>
<dbReference type="Pfam" id="PF19269">
    <property type="entry name" value="Anticodon_2"/>
    <property type="match status" value="1"/>
</dbReference>
<dbReference type="Pfam" id="PF00749">
    <property type="entry name" value="tRNA-synt_1c"/>
    <property type="match status" value="1"/>
</dbReference>
<dbReference type="PRINTS" id="PR00987">
    <property type="entry name" value="TRNASYNTHGLU"/>
</dbReference>
<dbReference type="SUPFAM" id="SSF48163">
    <property type="entry name" value="An anticodon-binding domain of class I aminoacyl-tRNA synthetases"/>
    <property type="match status" value="1"/>
</dbReference>
<dbReference type="SUPFAM" id="SSF52374">
    <property type="entry name" value="Nucleotidylyl transferase"/>
    <property type="match status" value="1"/>
</dbReference>
<dbReference type="PROSITE" id="PS00178">
    <property type="entry name" value="AA_TRNA_LIGASE_I"/>
    <property type="match status" value="1"/>
</dbReference>
<accession>Q3ZYP4</accession>
<gene>
    <name evidence="1" type="primary">gltX</name>
    <name type="ordered locus">cbdbA1316</name>
</gene>
<organism>
    <name type="scientific">Dehalococcoides mccartyi (strain CBDB1)</name>
    <dbReference type="NCBI Taxonomy" id="255470"/>
    <lineage>
        <taxon>Bacteria</taxon>
        <taxon>Bacillati</taxon>
        <taxon>Chloroflexota</taxon>
        <taxon>Dehalococcoidia</taxon>
        <taxon>Dehalococcoidales</taxon>
        <taxon>Dehalococcoidaceae</taxon>
        <taxon>Dehalococcoides</taxon>
    </lineage>
</organism>
<keyword id="KW-0030">Aminoacyl-tRNA synthetase</keyword>
<keyword id="KW-0067">ATP-binding</keyword>
<keyword id="KW-0963">Cytoplasm</keyword>
<keyword id="KW-0436">Ligase</keyword>
<keyword id="KW-0479">Metal-binding</keyword>
<keyword id="KW-0547">Nucleotide-binding</keyword>
<keyword id="KW-0648">Protein biosynthesis</keyword>
<keyword id="KW-0862">Zinc</keyword>
<reference key="1">
    <citation type="journal article" date="2005" name="Nat. Biotechnol.">
        <title>Genome sequence of the chlorinated compound-respiring bacterium Dehalococcoides species strain CBDB1.</title>
        <authorList>
            <person name="Kube M."/>
            <person name="Beck A."/>
            <person name="Zinder S.H."/>
            <person name="Kuhl H."/>
            <person name="Reinhardt R."/>
            <person name="Adrian L."/>
        </authorList>
    </citation>
    <scope>NUCLEOTIDE SEQUENCE [LARGE SCALE GENOMIC DNA]</scope>
    <source>
        <strain>CBDB1</strain>
    </source>
</reference>
<sequence length="487" mass="55527">MTNEVRVRYAPSPTGYPHLGNIRTAMFNWLFARHNGGKFIVRIEDTDRERYVEGAVESILESLNWLGLDWDEGPDKGGDYGPYYQSERLPLYRKAAEKLVAEGKAYYCHCSSEKLDKMREDQIARKEPPGYDRCCRDMGLGQKEGAVIRFKIPLDGQTAFTDLIRGEVTFDNAKQDDFVILKSDGFPTYHLASVVDDHAMQISHVLRAEEWLPSTPKHLMLYKALGYTPPLYAHLPMILGPDRSKLSKRHGATSTIEYKQAGYLPETMVNFLSLLGWAYDDKTELFSREQLIEYFCLEKVSKTAAIFNYEKLDWMNGMYIRTLSAQDLACRAMPFLEKDVRIAASGHLNLDYTVKVMPLIQERAKKLNELAELCWFIYSDDISYDPALLIDKKLTKETSLSALKAANARLEALPNFDAASMEEHIRPLAAELELKPGQLFGMLRTASTGQQVAPPLFQTMEVLGRQRCLWRIAMAIARLSEMPFQRS</sequence>
<name>SYE_DEHMC</name>
<comment type="function">
    <text evidence="1">Catalyzes the attachment of glutamate to tRNA(Glu) in a two-step reaction: glutamate is first activated by ATP to form Glu-AMP and then transferred to the acceptor end of tRNA(Glu).</text>
</comment>
<comment type="catalytic activity">
    <reaction evidence="1">
        <text>tRNA(Glu) + L-glutamate + ATP = L-glutamyl-tRNA(Glu) + AMP + diphosphate</text>
        <dbReference type="Rhea" id="RHEA:23540"/>
        <dbReference type="Rhea" id="RHEA-COMP:9663"/>
        <dbReference type="Rhea" id="RHEA-COMP:9680"/>
        <dbReference type="ChEBI" id="CHEBI:29985"/>
        <dbReference type="ChEBI" id="CHEBI:30616"/>
        <dbReference type="ChEBI" id="CHEBI:33019"/>
        <dbReference type="ChEBI" id="CHEBI:78442"/>
        <dbReference type="ChEBI" id="CHEBI:78520"/>
        <dbReference type="ChEBI" id="CHEBI:456215"/>
        <dbReference type="EC" id="6.1.1.17"/>
    </reaction>
</comment>
<comment type="cofactor">
    <cofactor evidence="1">
        <name>Zn(2+)</name>
        <dbReference type="ChEBI" id="CHEBI:29105"/>
    </cofactor>
    <text evidence="1">Binds 1 zinc ion per subunit.</text>
</comment>
<comment type="subunit">
    <text evidence="1">Monomer.</text>
</comment>
<comment type="subcellular location">
    <subcellularLocation>
        <location evidence="1">Cytoplasm</location>
    </subcellularLocation>
</comment>
<comment type="similarity">
    <text evidence="1">Belongs to the class-I aminoacyl-tRNA synthetase family. Glutamate--tRNA ligase type 1 subfamily.</text>
</comment>
<proteinExistence type="inferred from homology"/>
<feature type="chain" id="PRO_0000237358" description="Glutamate--tRNA ligase">
    <location>
        <begin position="1"/>
        <end position="487"/>
    </location>
</feature>
<feature type="short sequence motif" description="'HIGH' region" evidence="1">
    <location>
        <begin position="11"/>
        <end position="21"/>
    </location>
</feature>
<feature type="short sequence motif" description="'KMSKS' region" evidence="1">
    <location>
        <begin position="245"/>
        <end position="249"/>
    </location>
</feature>
<feature type="binding site" evidence="1">
    <location>
        <position position="108"/>
    </location>
    <ligand>
        <name>Zn(2+)</name>
        <dbReference type="ChEBI" id="CHEBI:29105"/>
    </ligand>
</feature>
<feature type="binding site" evidence="1">
    <location>
        <position position="110"/>
    </location>
    <ligand>
        <name>Zn(2+)</name>
        <dbReference type="ChEBI" id="CHEBI:29105"/>
    </ligand>
</feature>
<feature type="binding site" evidence="1">
    <location>
        <position position="135"/>
    </location>
    <ligand>
        <name>Zn(2+)</name>
        <dbReference type="ChEBI" id="CHEBI:29105"/>
    </ligand>
</feature>
<feature type="binding site" evidence="1">
    <location>
        <position position="137"/>
    </location>
    <ligand>
        <name>Zn(2+)</name>
        <dbReference type="ChEBI" id="CHEBI:29105"/>
    </ligand>
</feature>
<feature type="binding site" evidence="1">
    <location>
        <position position="248"/>
    </location>
    <ligand>
        <name>ATP</name>
        <dbReference type="ChEBI" id="CHEBI:30616"/>
    </ligand>
</feature>
<evidence type="ECO:0000255" key="1">
    <source>
        <dbReference type="HAMAP-Rule" id="MF_00022"/>
    </source>
</evidence>
<protein>
    <recommendedName>
        <fullName evidence="1">Glutamate--tRNA ligase</fullName>
        <ecNumber evidence="1">6.1.1.17</ecNumber>
    </recommendedName>
    <alternativeName>
        <fullName evidence="1">Glutamyl-tRNA synthetase</fullName>
        <shortName evidence="1">GluRS</shortName>
    </alternativeName>
</protein>